<sequence length="480" mass="51214">MQSLRTTLLSLLLLLLAAPSLALPSGTGRSAPAATVCPEHCDPTRCAPPPTDCEGGRVRDACGCCEVCGALEGAACGLQEGPCGEGLQCVVPFGVPASATVRRRAQAGLCVCASSEPVCGSDAKTYTNLCQLRAASRRSEKLRQPPVIVLQRGACGQGQEDPNSLRHKYNFIADVVEKIAPAVVHIELYRKLPFSKREVPVASGSGFIVSEDGLIVTNAHVVTNKNRVKVELKNGATYEAKIKDVDEKADIALIKIDHQGKLPVLLLGRSSELRPGEFVVAIGSPFSLQNTVTTGIVSTTQRGGKELGLRNSDMDYIQTDAIINYGNSGGPLVNLDGEVIGINTLKVTAGISFAIPSDKIKKFLTESHDRQAKGKAVTKKKYIGIRMMSLTSSKAKELKDRHRDFPDVLSGAYIIEVIPDTPAEAGGLKENDVIISINGQSVVTANDVSDVIKKENTLNMVVRRGNEDIVITVIPEEIDP</sequence>
<name>HTRA1_MOUSE</name>
<keyword id="KW-1003">Cell membrane</keyword>
<keyword id="KW-0963">Cytoplasm</keyword>
<keyword id="KW-1015">Disulfide bond</keyword>
<keyword id="KW-0340">Growth factor binding</keyword>
<keyword id="KW-0378">Hydrolase</keyword>
<keyword id="KW-0472">Membrane</keyword>
<keyword id="KW-0645">Protease</keyword>
<keyword id="KW-1185">Reference proteome</keyword>
<keyword id="KW-0964">Secreted</keyword>
<keyword id="KW-0720">Serine protease</keyword>
<keyword id="KW-0732">Signal</keyword>
<accession>Q9R118</accession>
<accession>Q8BN04</accession>
<accession>Q8BN05</accession>
<accession>Q91WS3</accession>
<accession>Q9QZK6</accession>
<feature type="signal peptide" evidence="3">
    <location>
        <begin position="1"/>
        <end position="22"/>
    </location>
</feature>
<feature type="chain" id="PRO_0000026944" description="Serine protease HTRA1">
    <location>
        <begin position="23"/>
        <end position="480"/>
    </location>
</feature>
<feature type="domain" description="IGFBP N-terminal" evidence="5">
    <location>
        <begin position="33"/>
        <end position="113"/>
    </location>
</feature>
<feature type="domain" description="Kazal-like" evidence="6">
    <location>
        <begin position="98"/>
        <end position="157"/>
    </location>
</feature>
<feature type="domain" description="PDZ" evidence="4">
    <location>
        <begin position="365"/>
        <end position="467"/>
    </location>
</feature>
<feature type="region of interest" description="Serine protease">
    <location>
        <begin position="204"/>
        <end position="364"/>
    </location>
</feature>
<feature type="active site" description="Charge relay system" evidence="2">
    <location>
        <position position="220"/>
    </location>
</feature>
<feature type="active site" description="Charge relay system" evidence="2">
    <location>
        <position position="250"/>
    </location>
</feature>
<feature type="active site" description="Charge relay system" evidence="2">
    <location>
        <position position="328"/>
    </location>
</feature>
<feature type="site" description="Involved in trimer stabilization" evidence="2">
    <location>
        <position position="169"/>
    </location>
</feature>
<feature type="site" description="Involved in trimer stabilization" evidence="2">
    <location>
        <position position="171"/>
    </location>
</feature>
<feature type="site" description="Involved in trimer stabilization" evidence="2">
    <location>
        <position position="278"/>
    </location>
</feature>
<feature type="disulfide bond" evidence="5">
    <location>
        <begin position="37"/>
        <end position="62"/>
    </location>
</feature>
<feature type="disulfide bond" evidence="5">
    <location>
        <begin position="41"/>
        <end position="64"/>
    </location>
</feature>
<feature type="disulfide bond" evidence="5">
    <location>
        <begin position="46"/>
        <end position="65"/>
    </location>
</feature>
<feature type="disulfide bond" evidence="5">
    <location>
        <begin position="53"/>
        <end position="68"/>
    </location>
</feature>
<feature type="disulfide bond" evidence="5">
    <location>
        <begin position="76"/>
        <end position="89"/>
    </location>
</feature>
<feature type="disulfide bond" evidence="5">
    <location>
        <begin position="83"/>
        <end position="110"/>
    </location>
</feature>
<feature type="disulfide bond" evidence="12">
    <location>
        <begin position="112"/>
        <end position="130"/>
    </location>
</feature>
<feature type="disulfide bond" evidence="6">
    <location>
        <begin position="119"/>
        <end position="155"/>
    </location>
</feature>
<feature type="mutagenesis site" description="Loss of efficient trimer formation." evidence="8">
    <original>F</original>
    <variation>D</variation>
    <location>
        <position position="171"/>
    </location>
</feature>
<feature type="mutagenesis site" description="Loss of enzymatic activity. No effect on BMP4-binding." evidence="7">
    <original>S</original>
    <variation>A</variation>
    <location>
        <position position="328"/>
    </location>
</feature>
<feature type="sequence conflict" description="In Ref. 1; AAD49422." evidence="12" ref="1">
    <original>V</original>
    <variation>L</variation>
    <location>
        <position position="91"/>
    </location>
</feature>
<feature type="sequence conflict" description="In Ref. 1; AAD49422." evidence="12" ref="1">
    <original>R</original>
    <variation>P</variation>
    <location>
        <position position="143"/>
    </location>
</feature>
<feature type="sequence conflict" description="In Ref. 1; AAD49422." evidence="12" ref="1">
    <original>I</original>
    <variation>F</variation>
    <location>
        <position position="179"/>
    </location>
</feature>
<feature type="sequence conflict" description="In Ref. 1; AAD49422." evidence="12" ref="1">
    <original>A</original>
    <variation>D</variation>
    <location>
        <position position="182"/>
    </location>
</feature>
<feature type="sequence conflict" description="In Ref. 1; AAD49422." evidence="12" ref="1">
    <original>HI</original>
    <variation>KH</variation>
    <location>
        <begin position="185"/>
        <end position="186"/>
    </location>
</feature>
<feature type="sequence conflict" description="In Ref. 1; AAD49422." evidence="12" ref="1">
    <original>K</original>
    <variation>I</variation>
    <location>
        <position position="241"/>
    </location>
</feature>
<feature type="sequence conflict" description="In Ref. 5; BAC41168." evidence="12" ref="5">
    <original>Q</original>
    <variation>K</variation>
    <location>
        <position position="259"/>
    </location>
</feature>
<feature type="sequence conflict" description="In Ref. 4; AAH13516." evidence="12" ref="4">
    <original>E</original>
    <variation>Q</variation>
    <location>
        <position position="366"/>
    </location>
</feature>
<gene>
    <name type="primary">Htra1</name>
    <name type="synonym">Htra</name>
    <name type="synonym">Prss11</name>
</gene>
<evidence type="ECO:0000250" key="1"/>
<evidence type="ECO:0000250" key="2">
    <source>
        <dbReference type="UniProtKB" id="Q92743"/>
    </source>
</evidence>
<evidence type="ECO:0000255" key="3"/>
<evidence type="ECO:0000255" key="4">
    <source>
        <dbReference type="PROSITE-ProRule" id="PRU00143"/>
    </source>
</evidence>
<evidence type="ECO:0000255" key="5">
    <source>
        <dbReference type="PROSITE-ProRule" id="PRU00653"/>
    </source>
</evidence>
<evidence type="ECO:0000255" key="6">
    <source>
        <dbReference type="PROSITE-ProRule" id="PRU00798"/>
    </source>
</evidence>
<evidence type="ECO:0000269" key="7">
    <source>
    </source>
</evidence>
<evidence type="ECO:0000269" key="8">
    <source>
    </source>
</evidence>
<evidence type="ECO:0000269" key="9">
    <source>
    </source>
</evidence>
<evidence type="ECO:0000269" key="10">
    <source>
    </source>
</evidence>
<evidence type="ECO:0000269" key="11">
    <source>
    </source>
</evidence>
<evidence type="ECO:0000305" key="12"/>
<protein>
    <recommendedName>
        <fullName>Serine protease HTRA1</fullName>
        <ecNumber>3.4.21.-</ecNumber>
    </recommendedName>
    <alternativeName>
        <fullName>High-temperature requirement A serine peptidase 1</fullName>
    </alternativeName>
    <alternativeName>
        <fullName>Serine protease 11</fullName>
    </alternativeName>
</protein>
<comment type="function">
    <text evidence="7 9 10 11">Serine protease with a variety of targets, including extracellular matrix proteins such as fibronectin. HTRA1-generated fibronectin fragments further induce synovial cells to up-regulate MMP1 and MMP3 production. May also degrade proteoglycans, such as aggrecan, decorin and fibromodulin. Through cleavage of proteoglycans, may release soluble FGF-glycosaminoglycan complexes that promote the range and intensity of FGF signals in the extracellular space. Regulates the availability of insulin-like growth factors (IGFs) by cleaving IGF-binding proteins. Inhibits signaling mediated by TGF-beta family members. This activity requires the integrity of the catalytic site, but it is unclear whether it leads to the proteolytic degradation of TGF-beta proteins themselves (PubMed:18551132) or not (PubMed:14973287). By acting on TGF-beta signaling, may regulate many physiological processes, including retinal angiogenesis and neuronal survival and maturation during development. Intracellularly, degrades TSC2, leading to the activation of TSC2 downstream targets.</text>
</comment>
<comment type="subunit">
    <text evidence="1 7">Forms homotrimers. In the presence of substrate, may form higher-order multimers in a PDZ-independent manner (By similarity). Interacts with TGF-beta family members, including BMP4, TGFB1, TGFB2, activin A and GDF5.</text>
</comment>
<comment type="subcellular location">
    <subcellularLocation>
        <location evidence="2">Cell membrane</location>
    </subcellularLocation>
    <subcellularLocation>
        <location evidence="2">Secreted</location>
    </subcellularLocation>
    <subcellularLocation>
        <location evidence="2">Cytoplasm</location>
        <location evidence="2">Cytosol</location>
    </subcellularLocation>
    <text evidence="2">Predominantly secreted. Also found associated with the plasma membrane.</text>
</comment>
<comment type="tissue specificity">
    <text evidence="7 9 10">In the brain, mainly expressed in cortical areas both in glial cells and neurons (at protein level). In bones, deposited in the matrix, with higher level in newly formed bone compared to fully calcified bone (at protein level). Also expressed in the tendons (at protein level). In the articular cartilage, detected only in the deepest zone of the joint cartilage. Not detected in the chondrocytes of the growth plate (at protein level). In an experimental arthritis model, at early disease stages, up-regulated in articular chondrocytes in the deep layers of the cartilage (at protein level). As arthritis progresses, chondrocyte expression expands toward the surface.</text>
</comment>
<comment type="developmental stage">
    <text evidence="7 9 10">First detected at 10.5 dpc. At 11.5 dpc, in the developing heart, expressed in the atrioventricular endocardial cushion and the outflow tract (at protein level). At 14.5 dpc, strong expression in the outflow tracts, including valves. In the developing skeleton, expressed at 12.5 dpc in the vertebral column and limbs. At 14.5 dpc, expressed in rudiments of tendons and ligaments along the vertebrae, as well as in mesenchymal cells surrounding precartilage condensations. Not detected in precartilage condensations, nor in chondrocytes, but strongly expressed in ossification centers. At 17.5 dpc, in the hind limb, significant expression persists in tendons and ligaments, but expression in the forming joints is reduced. At this stage, weakly detected in the thin layer of articular surfaces. Postnatally, in long bones, expressed by terminally differentiated hypertrophic chondrocytes that are committed to degeneration and eventually replaced by bone, as well as by osteoblasts at late differentiation stages and by mature osteocytes. In the developing brain, expressed in specific regions of the neuroepithelium in the forebrain and hindbrain adjacent to the forming choroid plexus. From 17.5 dpc till birth, expressed in neurogenic areas including ventricular zones (at protein level). At 12.5 and 14.5 dpc, expressed in Muellerian duct cells and in the surrounding mesenchyme in both male and female gonads. In the lung, detected in the mesenchymal cells. Expressed at 12.5 dpc in abdominal skin, both in epidermis and dermis. Also expressed in the epithelium of developing whiskers at 14.5 dpc. At later stages, localized in the basal layer of epidermis and in the invading epidermal cells that formed the whisker rudiments (at protein level). 9 days after birth, detected in the whisker outer root sheet (at protein level).</text>
</comment>
<comment type="domain">
    <text evidence="1">The IGFBP N-terminal domain mediates interaction with TSC2 substrate.</text>
</comment>
<comment type="disruption phenotype">
    <text evidence="11">Mutants mice exhibit reduced retinal capillary density, as compared to wild type animals, in all 3 retinal layers, nerve fiber layer, as well as inner and outer plexiform layers.</text>
</comment>
<comment type="similarity">
    <text evidence="12">Belongs to the peptidase S1C family.</text>
</comment>
<dbReference type="EC" id="3.4.21.-"/>
<dbReference type="EMBL" id="AF172994">
    <property type="protein sequence ID" value="AAD49422.1"/>
    <property type="molecule type" value="mRNA"/>
</dbReference>
<dbReference type="EMBL" id="AF179369">
    <property type="protein sequence ID" value="AAD52682.1"/>
    <property type="molecule type" value="mRNA"/>
</dbReference>
<dbReference type="EMBL" id="CH466531">
    <property type="protein sequence ID" value="EDL17689.1"/>
    <property type="molecule type" value="Genomic_DNA"/>
</dbReference>
<dbReference type="EMBL" id="BC013516">
    <property type="protein sequence ID" value="AAH13516.1"/>
    <property type="molecule type" value="mRNA"/>
</dbReference>
<dbReference type="EMBL" id="AK090320">
    <property type="protein sequence ID" value="BAC41168.1"/>
    <property type="molecule type" value="mRNA"/>
</dbReference>
<dbReference type="EMBL" id="AK090321">
    <property type="protein sequence ID" value="BAC41169.1"/>
    <property type="molecule type" value="mRNA"/>
</dbReference>
<dbReference type="CCDS" id="CCDS21908.1"/>
<dbReference type="RefSeq" id="NP_062510.2">
    <property type="nucleotide sequence ID" value="NM_019564.3"/>
</dbReference>
<dbReference type="SMR" id="Q9R118"/>
<dbReference type="BioGRID" id="207847">
    <property type="interactions" value="8"/>
</dbReference>
<dbReference type="FunCoup" id="Q9R118">
    <property type="interactions" value="34"/>
</dbReference>
<dbReference type="IntAct" id="Q9R118">
    <property type="interactions" value="2"/>
</dbReference>
<dbReference type="MINT" id="Q9R118"/>
<dbReference type="STRING" id="10090.ENSMUSP00000006367"/>
<dbReference type="MEROPS" id="S01.277"/>
<dbReference type="CarbonylDB" id="Q9R118"/>
<dbReference type="PhosphoSitePlus" id="Q9R118"/>
<dbReference type="SwissPalm" id="Q9R118"/>
<dbReference type="jPOST" id="Q9R118"/>
<dbReference type="PaxDb" id="10090-ENSMUSP00000006367"/>
<dbReference type="PeptideAtlas" id="Q9R118"/>
<dbReference type="ProteomicsDB" id="273199"/>
<dbReference type="Antibodypedia" id="32265">
    <property type="antibodies" value="291 antibodies from 32 providers"/>
</dbReference>
<dbReference type="DNASU" id="56213"/>
<dbReference type="Ensembl" id="ENSMUST00000006367.8">
    <property type="protein sequence ID" value="ENSMUSP00000006367.8"/>
    <property type="gene ID" value="ENSMUSG00000006205.14"/>
</dbReference>
<dbReference type="GeneID" id="56213"/>
<dbReference type="KEGG" id="mmu:56213"/>
<dbReference type="UCSC" id="uc009kau.2">
    <property type="organism name" value="mouse"/>
</dbReference>
<dbReference type="AGR" id="MGI:1929076"/>
<dbReference type="CTD" id="5654"/>
<dbReference type="MGI" id="MGI:1929076">
    <property type="gene designation" value="Htra1"/>
</dbReference>
<dbReference type="VEuPathDB" id="HostDB:ENSMUSG00000006205"/>
<dbReference type="eggNOG" id="KOG1320">
    <property type="taxonomic scope" value="Eukaryota"/>
</dbReference>
<dbReference type="GeneTree" id="ENSGT00940000156955"/>
<dbReference type="HOGENOM" id="CLU_020120_6_2_1"/>
<dbReference type="InParanoid" id="Q9R118"/>
<dbReference type="OMA" id="PAECAGS"/>
<dbReference type="OrthoDB" id="47470at9989"/>
<dbReference type="PhylomeDB" id="Q9R118"/>
<dbReference type="TreeFam" id="TF323480"/>
<dbReference type="BRENDA" id="3.4.21.107">
    <property type="organism ID" value="3474"/>
</dbReference>
<dbReference type="Reactome" id="R-MMU-1474228">
    <property type="pathway name" value="Degradation of the extracellular matrix"/>
</dbReference>
<dbReference type="BioGRID-ORCS" id="56213">
    <property type="hits" value="1 hit in 80 CRISPR screens"/>
</dbReference>
<dbReference type="ChiTaRS" id="Htra1">
    <property type="organism name" value="mouse"/>
</dbReference>
<dbReference type="PRO" id="PR:Q9R118"/>
<dbReference type="Proteomes" id="UP000000589">
    <property type="component" value="Chromosome 7"/>
</dbReference>
<dbReference type="RNAct" id="Q9R118">
    <property type="molecule type" value="protein"/>
</dbReference>
<dbReference type="Bgee" id="ENSMUSG00000006205">
    <property type="expression patterns" value="Expressed in decidua and 322 other cell types or tissues"/>
</dbReference>
<dbReference type="GO" id="GO:0062023">
    <property type="term" value="C:collagen-containing extracellular matrix"/>
    <property type="evidence" value="ECO:0007005"/>
    <property type="project" value="BHF-UCL"/>
</dbReference>
<dbReference type="GO" id="GO:0005829">
    <property type="term" value="C:cytosol"/>
    <property type="evidence" value="ECO:0007669"/>
    <property type="project" value="UniProtKB-SubCell"/>
</dbReference>
<dbReference type="GO" id="GO:0005576">
    <property type="term" value="C:extracellular region"/>
    <property type="evidence" value="ECO:0007669"/>
    <property type="project" value="UniProtKB-SubCell"/>
</dbReference>
<dbReference type="GO" id="GO:0005886">
    <property type="term" value="C:plasma membrane"/>
    <property type="evidence" value="ECO:0007669"/>
    <property type="project" value="UniProtKB-SubCell"/>
</dbReference>
<dbReference type="GO" id="GO:0019838">
    <property type="term" value="F:growth factor binding"/>
    <property type="evidence" value="ECO:0007669"/>
    <property type="project" value="UniProtKB-KW"/>
</dbReference>
<dbReference type="GO" id="GO:0042802">
    <property type="term" value="F:identical protein binding"/>
    <property type="evidence" value="ECO:0007669"/>
    <property type="project" value="Ensembl"/>
</dbReference>
<dbReference type="GO" id="GO:0004252">
    <property type="term" value="F:serine-type endopeptidase activity"/>
    <property type="evidence" value="ECO:0007669"/>
    <property type="project" value="InterPro"/>
</dbReference>
<dbReference type="GO" id="GO:0008236">
    <property type="term" value="F:serine-type peptidase activity"/>
    <property type="evidence" value="ECO:0000314"/>
    <property type="project" value="UniProtKB"/>
</dbReference>
<dbReference type="GO" id="GO:0060718">
    <property type="term" value="P:chorionic trophoblast cell differentiation"/>
    <property type="evidence" value="ECO:0000315"/>
    <property type="project" value="MGI"/>
</dbReference>
<dbReference type="GO" id="GO:0030514">
    <property type="term" value="P:negative regulation of BMP signaling pathway"/>
    <property type="evidence" value="ECO:0000314"/>
    <property type="project" value="MGI"/>
</dbReference>
<dbReference type="GO" id="GO:0030512">
    <property type="term" value="P:negative regulation of transforming growth factor beta receptor signaling pathway"/>
    <property type="evidence" value="ECO:0000314"/>
    <property type="project" value="MGI"/>
</dbReference>
<dbReference type="GO" id="GO:0001890">
    <property type="term" value="P:placenta development"/>
    <property type="evidence" value="ECO:0000315"/>
    <property type="project" value="MGI"/>
</dbReference>
<dbReference type="GO" id="GO:0006508">
    <property type="term" value="P:proteolysis"/>
    <property type="evidence" value="ECO:0000314"/>
    <property type="project" value="UniProtKB"/>
</dbReference>
<dbReference type="CDD" id="cd06785">
    <property type="entry name" value="cpPDZ_HtrA-like"/>
    <property type="match status" value="1"/>
</dbReference>
<dbReference type="CDD" id="cd00104">
    <property type="entry name" value="KAZAL_FS"/>
    <property type="match status" value="1"/>
</dbReference>
<dbReference type="FunFam" id="2.40.10.120:FF:000002">
    <property type="entry name" value="HtrA serine peptidase 3"/>
    <property type="match status" value="1"/>
</dbReference>
<dbReference type="FunFam" id="4.10.40.20:FF:000004">
    <property type="entry name" value="HtrA serine peptidase 3"/>
    <property type="match status" value="1"/>
</dbReference>
<dbReference type="FunFam" id="3.30.60.30:FF:000026">
    <property type="entry name" value="Insulin-like growth factor-binding protein 7"/>
    <property type="match status" value="1"/>
</dbReference>
<dbReference type="FunFam" id="2.30.42.10:FF:000142">
    <property type="entry name" value="Serine protease HTRA1"/>
    <property type="match status" value="1"/>
</dbReference>
<dbReference type="Gene3D" id="2.30.42.10">
    <property type="match status" value="1"/>
</dbReference>
<dbReference type="Gene3D" id="2.40.10.120">
    <property type="match status" value="1"/>
</dbReference>
<dbReference type="Gene3D" id="3.30.60.30">
    <property type="match status" value="1"/>
</dbReference>
<dbReference type="Gene3D" id="4.10.40.20">
    <property type="match status" value="1"/>
</dbReference>
<dbReference type="InterPro" id="IPR009030">
    <property type="entry name" value="Growth_fac_rcpt_cys_sf"/>
</dbReference>
<dbReference type="InterPro" id="IPR000867">
    <property type="entry name" value="IGFBP-like"/>
</dbReference>
<dbReference type="InterPro" id="IPR002350">
    <property type="entry name" value="Kazal_dom"/>
</dbReference>
<dbReference type="InterPro" id="IPR036058">
    <property type="entry name" value="Kazal_dom_sf"/>
</dbReference>
<dbReference type="InterPro" id="IPR001478">
    <property type="entry name" value="PDZ"/>
</dbReference>
<dbReference type="InterPro" id="IPR041489">
    <property type="entry name" value="PDZ_6"/>
</dbReference>
<dbReference type="InterPro" id="IPR036034">
    <property type="entry name" value="PDZ_sf"/>
</dbReference>
<dbReference type="InterPro" id="IPR009003">
    <property type="entry name" value="Peptidase_S1_PA"/>
</dbReference>
<dbReference type="InterPro" id="IPR001940">
    <property type="entry name" value="Peptidase_S1C"/>
</dbReference>
<dbReference type="PANTHER" id="PTHR22939">
    <property type="entry name" value="SERINE PROTEASE FAMILY S1C HTRA-RELATED"/>
    <property type="match status" value="1"/>
</dbReference>
<dbReference type="PANTHER" id="PTHR22939:SF13">
    <property type="entry name" value="SERINE PROTEASE HTRA1"/>
    <property type="match status" value="1"/>
</dbReference>
<dbReference type="Pfam" id="PF00219">
    <property type="entry name" value="IGFBP"/>
    <property type="match status" value="1"/>
</dbReference>
<dbReference type="Pfam" id="PF07648">
    <property type="entry name" value="Kazal_2"/>
    <property type="match status" value="1"/>
</dbReference>
<dbReference type="Pfam" id="PF17820">
    <property type="entry name" value="PDZ_6"/>
    <property type="match status" value="1"/>
</dbReference>
<dbReference type="Pfam" id="PF13365">
    <property type="entry name" value="Trypsin_2"/>
    <property type="match status" value="1"/>
</dbReference>
<dbReference type="PRINTS" id="PR00834">
    <property type="entry name" value="PROTEASES2C"/>
</dbReference>
<dbReference type="SMART" id="SM00121">
    <property type="entry name" value="IB"/>
    <property type="match status" value="1"/>
</dbReference>
<dbReference type="SMART" id="SM00280">
    <property type="entry name" value="KAZAL"/>
    <property type="match status" value="1"/>
</dbReference>
<dbReference type="SMART" id="SM00228">
    <property type="entry name" value="PDZ"/>
    <property type="match status" value="1"/>
</dbReference>
<dbReference type="SUPFAM" id="SSF57184">
    <property type="entry name" value="Growth factor receptor domain"/>
    <property type="match status" value="1"/>
</dbReference>
<dbReference type="SUPFAM" id="SSF100895">
    <property type="entry name" value="Kazal-type serine protease inhibitors"/>
    <property type="match status" value="1"/>
</dbReference>
<dbReference type="SUPFAM" id="SSF50156">
    <property type="entry name" value="PDZ domain-like"/>
    <property type="match status" value="1"/>
</dbReference>
<dbReference type="SUPFAM" id="SSF50494">
    <property type="entry name" value="Trypsin-like serine proteases"/>
    <property type="match status" value="1"/>
</dbReference>
<dbReference type="PROSITE" id="PS51323">
    <property type="entry name" value="IGFBP_N_2"/>
    <property type="match status" value="1"/>
</dbReference>
<dbReference type="PROSITE" id="PS51465">
    <property type="entry name" value="KAZAL_2"/>
    <property type="match status" value="1"/>
</dbReference>
<dbReference type="PROSITE" id="PS50106">
    <property type="entry name" value="PDZ"/>
    <property type="match status" value="1"/>
</dbReference>
<reference key="1">
    <citation type="journal article" date="2004" name="Development">
        <title>HtrA1 serine protease inhibits signaling mediated by Tgfbeta family proteins.</title>
        <authorList>
            <person name="Oka C."/>
            <person name="Tsujimoto R."/>
            <person name="Kajikawa M."/>
            <person name="Koshiba-Takeuchi K."/>
            <person name="Ina J."/>
            <person name="Yano M."/>
            <person name="Tsuchiya A."/>
            <person name="Ueta Y."/>
            <person name="Soma A."/>
            <person name="Kanda H."/>
            <person name="Matsumoto M."/>
            <person name="Kawaichi M."/>
        </authorList>
    </citation>
    <scope>NUCLEOTIDE SEQUENCE [MRNA]</scope>
    <scope>FUNCTION</scope>
    <scope>INTERACTION WITH BMP4; TGFB2; TGFB1; ACTIVIN A AND GDF5</scope>
    <scope>TISSUE SPECIFICITY</scope>
    <scope>DEVELOPMENTAL STAGE</scope>
    <scope>MUTAGENESIS OF SER-328</scope>
    <source>
        <strain>ICR</strain>
        <tissue>Brain</tissue>
    </source>
</reference>
<reference key="2">
    <citation type="submission" date="1999-08" db="EMBL/GenBank/DDBJ databases">
        <title>Mouse insulin-like growth factor binding protein 5-directed endopeptidase: structural assessment, evolutionary analysis, ovarian expression, hormonal regulation and cellular localization.</title>
        <authorList>
            <person name="Hourvitz A."/>
            <person name="Hennebold J.D."/>
            <person name="King G."/>
            <person name="Negishi H."/>
            <person name="Erickson G.F."/>
            <person name="Roby J.A."/>
            <person name="Mayo K.E."/>
            <person name="Adashi E.Y."/>
        </authorList>
    </citation>
    <scope>NUCLEOTIDE SEQUENCE [MRNA]</scope>
    <source>
        <strain>C57BL/6J</strain>
        <tissue>Ovary</tissue>
    </source>
</reference>
<reference key="3">
    <citation type="submission" date="2005-07" db="EMBL/GenBank/DDBJ databases">
        <authorList>
            <person name="Mural R.J."/>
            <person name="Adams M.D."/>
            <person name="Myers E.W."/>
            <person name="Smith H.O."/>
            <person name="Venter J.C."/>
        </authorList>
    </citation>
    <scope>NUCLEOTIDE SEQUENCE [LARGE SCALE GENOMIC DNA]</scope>
</reference>
<reference key="4">
    <citation type="journal article" date="2004" name="Genome Res.">
        <title>The status, quality, and expansion of the NIH full-length cDNA project: the Mammalian Gene Collection (MGC).</title>
        <authorList>
            <consortium name="The MGC Project Team"/>
        </authorList>
    </citation>
    <scope>NUCLEOTIDE SEQUENCE [LARGE SCALE MRNA]</scope>
</reference>
<reference key="5">
    <citation type="journal article" date="2005" name="Science">
        <title>The transcriptional landscape of the mammalian genome.</title>
        <authorList>
            <person name="Carninci P."/>
            <person name="Kasukawa T."/>
            <person name="Katayama S."/>
            <person name="Gough J."/>
            <person name="Frith M.C."/>
            <person name="Maeda N."/>
            <person name="Oyama R."/>
            <person name="Ravasi T."/>
            <person name="Lenhard B."/>
            <person name="Wells C."/>
            <person name="Kodzius R."/>
            <person name="Shimokawa K."/>
            <person name="Bajic V.B."/>
            <person name="Brenner S.E."/>
            <person name="Batalov S."/>
            <person name="Forrest A.R."/>
            <person name="Zavolan M."/>
            <person name="Davis M.J."/>
            <person name="Wilming L.G."/>
            <person name="Aidinis V."/>
            <person name="Allen J.E."/>
            <person name="Ambesi-Impiombato A."/>
            <person name="Apweiler R."/>
            <person name="Aturaliya R.N."/>
            <person name="Bailey T.L."/>
            <person name="Bansal M."/>
            <person name="Baxter L."/>
            <person name="Beisel K.W."/>
            <person name="Bersano T."/>
            <person name="Bono H."/>
            <person name="Chalk A.M."/>
            <person name="Chiu K.P."/>
            <person name="Choudhary V."/>
            <person name="Christoffels A."/>
            <person name="Clutterbuck D.R."/>
            <person name="Crowe M.L."/>
            <person name="Dalla E."/>
            <person name="Dalrymple B.P."/>
            <person name="de Bono B."/>
            <person name="Della Gatta G."/>
            <person name="di Bernardo D."/>
            <person name="Down T."/>
            <person name="Engstrom P."/>
            <person name="Fagiolini M."/>
            <person name="Faulkner G."/>
            <person name="Fletcher C.F."/>
            <person name="Fukushima T."/>
            <person name="Furuno M."/>
            <person name="Futaki S."/>
            <person name="Gariboldi M."/>
            <person name="Georgii-Hemming P."/>
            <person name="Gingeras T.R."/>
            <person name="Gojobori T."/>
            <person name="Green R.E."/>
            <person name="Gustincich S."/>
            <person name="Harbers M."/>
            <person name="Hayashi Y."/>
            <person name="Hensch T.K."/>
            <person name="Hirokawa N."/>
            <person name="Hill D."/>
            <person name="Huminiecki L."/>
            <person name="Iacono M."/>
            <person name="Ikeo K."/>
            <person name="Iwama A."/>
            <person name="Ishikawa T."/>
            <person name="Jakt M."/>
            <person name="Kanapin A."/>
            <person name="Katoh M."/>
            <person name="Kawasawa Y."/>
            <person name="Kelso J."/>
            <person name="Kitamura H."/>
            <person name="Kitano H."/>
            <person name="Kollias G."/>
            <person name="Krishnan S.P."/>
            <person name="Kruger A."/>
            <person name="Kummerfeld S.K."/>
            <person name="Kurochkin I.V."/>
            <person name="Lareau L.F."/>
            <person name="Lazarevic D."/>
            <person name="Lipovich L."/>
            <person name="Liu J."/>
            <person name="Liuni S."/>
            <person name="McWilliam S."/>
            <person name="Madan Babu M."/>
            <person name="Madera M."/>
            <person name="Marchionni L."/>
            <person name="Matsuda H."/>
            <person name="Matsuzawa S."/>
            <person name="Miki H."/>
            <person name="Mignone F."/>
            <person name="Miyake S."/>
            <person name="Morris K."/>
            <person name="Mottagui-Tabar S."/>
            <person name="Mulder N."/>
            <person name="Nakano N."/>
            <person name="Nakauchi H."/>
            <person name="Ng P."/>
            <person name="Nilsson R."/>
            <person name="Nishiguchi S."/>
            <person name="Nishikawa S."/>
            <person name="Nori F."/>
            <person name="Ohara O."/>
            <person name="Okazaki Y."/>
            <person name="Orlando V."/>
            <person name="Pang K.C."/>
            <person name="Pavan W.J."/>
            <person name="Pavesi G."/>
            <person name="Pesole G."/>
            <person name="Petrovsky N."/>
            <person name="Piazza S."/>
            <person name="Reed J."/>
            <person name="Reid J.F."/>
            <person name="Ring B.Z."/>
            <person name="Ringwald M."/>
            <person name="Rost B."/>
            <person name="Ruan Y."/>
            <person name="Salzberg S.L."/>
            <person name="Sandelin A."/>
            <person name="Schneider C."/>
            <person name="Schoenbach C."/>
            <person name="Sekiguchi K."/>
            <person name="Semple C.A."/>
            <person name="Seno S."/>
            <person name="Sessa L."/>
            <person name="Sheng Y."/>
            <person name="Shibata Y."/>
            <person name="Shimada H."/>
            <person name="Shimada K."/>
            <person name="Silva D."/>
            <person name="Sinclair B."/>
            <person name="Sperling S."/>
            <person name="Stupka E."/>
            <person name="Sugiura K."/>
            <person name="Sultana R."/>
            <person name="Takenaka Y."/>
            <person name="Taki K."/>
            <person name="Tammoja K."/>
            <person name="Tan S.L."/>
            <person name="Tang S."/>
            <person name="Taylor M.S."/>
            <person name="Tegner J."/>
            <person name="Teichmann S.A."/>
            <person name="Ueda H.R."/>
            <person name="van Nimwegen E."/>
            <person name="Verardo R."/>
            <person name="Wei C.L."/>
            <person name="Yagi K."/>
            <person name="Yamanishi H."/>
            <person name="Zabarovsky E."/>
            <person name="Zhu S."/>
            <person name="Zimmer A."/>
            <person name="Hide W."/>
            <person name="Bult C."/>
            <person name="Grimmond S.M."/>
            <person name="Teasdale R.D."/>
            <person name="Liu E.T."/>
            <person name="Brusic V."/>
            <person name="Quackenbush J."/>
            <person name="Wahlestedt C."/>
            <person name="Mattick J.S."/>
            <person name="Hume D.A."/>
            <person name="Kai C."/>
            <person name="Sasaki D."/>
            <person name="Tomaru Y."/>
            <person name="Fukuda S."/>
            <person name="Kanamori-Katayama M."/>
            <person name="Suzuki M."/>
            <person name="Aoki J."/>
            <person name="Arakawa T."/>
            <person name="Iida J."/>
            <person name="Imamura K."/>
            <person name="Itoh M."/>
            <person name="Kato T."/>
            <person name="Kawaji H."/>
            <person name="Kawagashira N."/>
            <person name="Kawashima T."/>
            <person name="Kojima M."/>
            <person name="Kondo S."/>
            <person name="Konno H."/>
            <person name="Nakano K."/>
            <person name="Ninomiya N."/>
            <person name="Nishio T."/>
            <person name="Okada M."/>
            <person name="Plessy C."/>
            <person name="Shibata K."/>
            <person name="Shiraki T."/>
            <person name="Suzuki S."/>
            <person name="Tagami M."/>
            <person name="Waki K."/>
            <person name="Watahiki A."/>
            <person name="Okamura-Oho Y."/>
            <person name="Suzuki H."/>
            <person name="Kawai J."/>
            <person name="Hayashizaki Y."/>
        </authorList>
    </citation>
    <scope>NUCLEOTIDE SEQUENCE [LARGE SCALE MRNA] OF 73-480</scope>
    <source>
        <strain>C57BL/6J</strain>
    </source>
</reference>
<reference key="6">
    <citation type="journal article" date="2004" name="Biochem. J.">
        <title>Binding of proteins to the PDZ domain regulates proteolytic activity of HtrA1 serine protease.</title>
        <authorList>
            <person name="Murwantoko I."/>
            <person name="Yano M."/>
            <person name="Ueta Y."/>
            <person name="Murasaki A."/>
            <person name="Kanda H."/>
            <person name="Oka C."/>
            <person name="Kawaichi M."/>
        </authorList>
    </citation>
    <scope>MUTAGENESIS OF PHE-171</scope>
</reference>
<reference key="7">
    <citation type="journal article" date="2005" name="Bone">
        <title>Expression of mouse HtrA1 serine protease in normal bone and cartilage and its upregulation in joint cartilage damaged by experimental arthritis.</title>
        <authorList>
            <person name="Tsuchiya A."/>
            <person name="Yano M."/>
            <person name="Tocharus J."/>
            <person name="Kojima H."/>
            <person name="Fukumoto M."/>
            <person name="Kawaichi M."/>
            <person name="Oka C."/>
        </authorList>
    </citation>
    <scope>FUNCTION</scope>
    <scope>TISSUE SPECIFICITY</scope>
    <scope>DEVELOPMENTAL STAGE</scope>
</reference>
<reference key="8">
    <citation type="journal article" date="2008" name="Cell Death Differ.">
        <title>HtrA1-dependent proteolysis of TGF-beta controls both neuronal maturation and developmental survival.</title>
        <authorList>
            <person name="Launay S."/>
            <person name="Maubert E."/>
            <person name="Lebeurrier N."/>
            <person name="Tennstaedt A."/>
            <person name="Campioni M."/>
            <person name="Docagne F."/>
            <person name="Gabriel C."/>
            <person name="Dauphinot L."/>
            <person name="Potier M.C."/>
            <person name="Ehrmann M."/>
            <person name="Baldi A."/>
            <person name="Vivien D."/>
        </authorList>
    </citation>
    <scope>FUNCTION</scope>
    <scope>TISSUE SPECIFICITY</scope>
    <scope>DEVELOPMENTAL STAGE</scope>
</reference>
<reference key="9">
    <citation type="journal article" date="2012" name="J. Biol. Chem.">
        <title>High temperature requirement factor A1 (HTRA1) gene regulates angiogenesis through transforming growth factor-beta family member growth differentiation factor 6.</title>
        <authorList>
            <person name="Zhang L."/>
            <person name="Lim S.L."/>
            <person name="Du H."/>
            <person name="Zhang M."/>
            <person name="Kozak I."/>
            <person name="Hannum G."/>
            <person name="Wang X."/>
            <person name="Ouyang H."/>
            <person name="Hughes G."/>
            <person name="Zhao L."/>
            <person name="Zhu X."/>
            <person name="Lee C."/>
            <person name="Su Z."/>
            <person name="Zhou X."/>
            <person name="Shaw R."/>
            <person name="Geum D."/>
            <person name="Wei X."/>
            <person name="Zhu J."/>
            <person name="Ideker T."/>
            <person name="Oka C."/>
            <person name="Wang N."/>
            <person name="Yang Z."/>
            <person name="Shaw P.X."/>
            <person name="Zhang K."/>
        </authorList>
    </citation>
    <scope>DISRUPTION PHENOTYPE</scope>
    <scope>FUNCTION</scope>
</reference>
<organism>
    <name type="scientific">Mus musculus</name>
    <name type="common">Mouse</name>
    <dbReference type="NCBI Taxonomy" id="10090"/>
    <lineage>
        <taxon>Eukaryota</taxon>
        <taxon>Metazoa</taxon>
        <taxon>Chordata</taxon>
        <taxon>Craniata</taxon>
        <taxon>Vertebrata</taxon>
        <taxon>Euteleostomi</taxon>
        <taxon>Mammalia</taxon>
        <taxon>Eutheria</taxon>
        <taxon>Euarchontoglires</taxon>
        <taxon>Glires</taxon>
        <taxon>Rodentia</taxon>
        <taxon>Myomorpha</taxon>
        <taxon>Muroidea</taxon>
        <taxon>Muridae</taxon>
        <taxon>Murinae</taxon>
        <taxon>Mus</taxon>
        <taxon>Mus</taxon>
    </lineage>
</organism>
<proteinExistence type="evidence at protein level"/>